<protein>
    <recommendedName>
        <fullName evidence="4">Depudecin biosynthesis cluster-specific transcription activator DEP6</fullName>
    </recommendedName>
    <alternativeName>
        <fullName evidence="4">Depudecin biosynthesis cluster protein 6</fullName>
    </alternativeName>
</protein>
<feature type="chain" id="PRO_0000441945" description="Depudecin biosynthesis cluster-specific transcription activator DEP6">
    <location>
        <begin position="1"/>
        <end position="646"/>
    </location>
</feature>
<feature type="DNA-binding region" description="Zn(2)-C6 fungal-type" evidence="1">
    <location>
        <begin position="16"/>
        <end position="43"/>
    </location>
</feature>
<feature type="region of interest" description="Disordered" evidence="2">
    <location>
        <begin position="76"/>
        <end position="130"/>
    </location>
</feature>
<feature type="region of interest" description="Disordered" evidence="2">
    <location>
        <begin position="345"/>
        <end position="366"/>
    </location>
</feature>
<feature type="compositionally biased region" description="Polar residues" evidence="2">
    <location>
        <begin position="349"/>
        <end position="360"/>
    </location>
</feature>
<reference key="1">
    <citation type="journal article" date="2009" name="Mol. Plant Microbe Interact.">
        <title>Biosynthesis and role in virulence of the histone deacetylase inhibitor depudecin from Alternaria brassicicola.</title>
        <authorList>
            <person name="Wight W.D."/>
            <person name="Kim K.-H."/>
            <person name="Lawrence C.B."/>
            <person name="Walton J.D."/>
        </authorList>
    </citation>
    <scope>NUCLEOTIDE SEQUENCE [GENOMIC DNA]</scope>
    <scope>DISRUPTION PHENOTYPE</scope>
    <scope>FUNCTION</scope>
    <source>
        <strain>MUCL 202097</strain>
    </source>
</reference>
<gene>
    <name evidence="4" type="primary">DEP6</name>
</gene>
<organism>
    <name type="scientific">Alternaria brassicicola</name>
    <name type="common">Dark leaf spot agent</name>
    <dbReference type="NCBI Taxonomy" id="29001"/>
    <lineage>
        <taxon>Eukaryota</taxon>
        <taxon>Fungi</taxon>
        <taxon>Dikarya</taxon>
        <taxon>Ascomycota</taxon>
        <taxon>Pezizomycotina</taxon>
        <taxon>Dothideomycetes</taxon>
        <taxon>Pleosporomycetidae</taxon>
        <taxon>Pleosporales</taxon>
        <taxon>Pleosporineae</taxon>
        <taxon>Pleosporaceae</taxon>
        <taxon>Alternaria</taxon>
        <taxon>Alternaria sect. Brassicicola</taxon>
    </lineage>
</organism>
<name>DEP6_ALTBR</name>
<accession>D2E9X1</accession>
<proteinExistence type="inferred from homology"/>
<keyword id="KW-0238">DNA-binding</keyword>
<keyword id="KW-0479">Metal-binding</keyword>
<keyword id="KW-0539">Nucleus</keyword>
<keyword id="KW-0804">Transcription</keyword>
<keyword id="KW-0805">Transcription regulation</keyword>
<keyword id="KW-0862">Zinc</keyword>
<sequence length="646" mass="72538">MRSSSAGTPFTAQYACEICRERKVRCDRALPKCRRCDRLNQPCSYNQAHQRRTRDEQLKQLQERLAKTEAQLAMNTTAAPLSVRSQSRSEGTELASSTRWIGTPDSFTPNSCSRRSSQYQLPTTSTSQSQLGSVLGTTAANTPMDLDNIRGMSATSGMSTNGSSLFDSDLFTSFTEGADSNMTFAWTNQPLMALEPLDNMLLNRPQSAPPNGSEEDLSPTDLSLLHNHYFESVYFSFPFINRDRFTAEKTGSRSPATTALVYAVALAGCTRSLQDHNRQSTCYGLARNYAERCEQEDHLNDLNFLQALLLIGRFEAMNRKLERSGLTLGRAAMLCKLLKLHQMDKSEHSQGMQNRETQSGPRLALPHTKDPVLLEERRRTFWGLYILQSYVRTRTGWEFQLEDTKNLQINLPSPGLLRSDLEPLKMPSLLNISTEPAPEITSYAGCVLMVELALRCFDNGQKRDTPGFWDDYCALVKKTDDLFKTLKRHLNATSIREDPVAFSLYLNLRATEIFSHDSAITKNEEQGLPPLMVAESQRRATTAAFQICSAVGLNLPSPWKADSDIIMLQAIFIAWPLTMALKALYRELVRGGIRETVNGVVASIRLLFAALDHIEESDGHWHQCVTNVEAKLQEWDEKNSFDSLAL</sequence>
<comment type="function">
    <text evidence="3">Transcription factor that positively regulates the expression of the gene cluster that mediates the biosynthesis of depudecin, a highly oxidized eleven-carbon linear polyketide that acts as a histone deacetylase (HDAC) inhibitor and makes a small contribution to pathogenesis (PubMed:19737099).</text>
</comment>
<comment type="subcellular location">
    <subcellularLocation>
        <location evidence="1">Nucleus</location>
    </subcellularLocation>
</comment>
<comment type="disruption phenotype">
    <text evidence="3">Affects the expression of all the depudecin cluster genes and impairs the production of depudecin (PubMed:19737099).</text>
</comment>
<evidence type="ECO:0000255" key="1">
    <source>
        <dbReference type="PROSITE-ProRule" id="PRU00227"/>
    </source>
</evidence>
<evidence type="ECO:0000256" key="2">
    <source>
        <dbReference type="SAM" id="MobiDB-lite"/>
    </source>
</evidence>
<evidence type="ECO:0000269" key="3">
    <source>
    </source>
</evidence>
<evidence type="ECO:0000303" key="4">
    <source>
    </source>
</evidence>
<dbReference type="EMBL" id="FJ977165">
    <property type="protein sequence ID" value="ACZ57549.1"/>
    <property type="molecule type" value="Genomic_DNA"/>
</dbReference>
<dbReference type="SMR" id="D2E9X1"/>
<dbReference type="PHI-base" id="PHI:2380"/>
<dbReference type="GO" id="GO:0005634">
    <property type="term" value="C:nucleus"/>
    <property type="evidence" value="ECO:0007669"/>
    <property type="project" value="UniProtKB-SubCell"/>
</dbReference>
<dbReference type="GO" id="GO:0003677">
    <property type="term" value="F:DNA binding"/>
    <property type="evidence" value="ECO:0007669"/>
    <property type="project" value="UniProtKB-KW"/>
</dbReference>
<dbReference type="GO" id="GO:0000981">
    <property type="term" value="F:DNA-binding transcription factor activity, RNA polymerase II-specific"/>
    <property type="evidence" value="ECO:0007669"/>
    <property type="project" value="InterPro"/>
</dbReference>
<dbReference type="GO" id="GO:0008270">
    <property type="term" value="F:zinc ion binding"/>
    <property type="evidence" value="ECO:0007669"/>
    <property type="project" value="InterPro"/>
</dbReference>
<dbReference type="GO" id="GO:0006351">
    <property type="term" value="P:DNA-templated transcription"/>
    <property type="evidence" value="ECO:0007669"/>
    <property type="project" value="InterPro"/>
</dbReference>
<dbReference type="CDD" id="cd12148">
    <property type="entry name" value="fungal_TF_MHR"/>
    <property type="match status" value="1"/>
</dbReference>
<dbReference type="CDD" id="cd00067">
    <property type="entry name" value="GAL4"/>
    <property type="match status" value="1"/>
</dbReference>
<dbReference type="Gene3D" id="4.10.240.10">
    <property type="entry name" value="Zn(2)-C6 fungal-type DNA-binding domain"/>
    <property type="match status" value="1"/>
</dbReference>
<dbReference type="InterPro" id="IPR050815">
    <property type="entry name" value="TF_fung"/>
</dbReference>
<dbReference type="InterPro" id="IPR007219">
    <property type="entry name" value="Transcription_factor_dom_fun"/>
</dbReference>
<dbReference type="InterPro" id="IPR036864">
    <property type="entry name" value="Zn2-C6_fun-type_DNA-bd_sf"/>
</dbReference>
<dbReference type="InterPro" id="IPR001138">
    <property type="entry name" value="Zn2Cys6_DnaBD"/>
</dbReference>
<dbReference type="PANTHER" id="PTHR47338:SF10">
    <property type="entry name" value="TRANSCRIPTION FACTOR DOMAIN-CONTAINING PROTEIN-RELATED"/>
    <property type="match status" value="1"/>
</dbReference>
<dbReference type="PANTHER" id="PTHR47338">
    <property type="entry name" value="ZN(II)2CYS6 TRANSCRIPTION FACTOR (EUROFUNG)-RELATED"/>
    <property type="match status" value="1"/>
</dbReference>
<dbReference type="Pfam" id="PF04082">
    <property type="entry name" value="Fungal_trans"/>
    <property type="match status" value="1"/>
</dbReference>
<dbReference type="Pfam" id="PF00172">
    <property type="entry name" value="Zn_clus"/>
    <property type="match status" value="1"/>
</dbReference>
<dbReference type="SMART" id="SM00066">
    <property type="entry name" value="GAL4"/>
    <property type="match status" value="1"/>
</dbReference>
<dbReference type="SUPFAM" id="SSF57701">
    <property type="entry name" value="Zn2/Cys6 DNA-binding domain"/>
    <property type="match status" value="1"/>
</dbReference>
<dbReference type="PROSITE" id="PS00463">
    <property type="entry name" value="ZN2_CY6_FUNGAL_1"/>
    <property type="match status" value="1"/>
</dbReference>
<dbReference type="PROSITE" id="PS50048">
    <property type="entry name" value="ZN2_CY6_FUNGAL_2"/>
    <property type="match status" value="1"/>
</dbReference>